<organism>
    <name type="scientific">Bacillus cereus (strain AH187)</name>
    <dbReference type="NCBI Taxonomy" id="405534"/>
    <lineage>
        <taxon>Bacteria</taxon>
        <taxon>Bacillati</taxon>
        <taxon>Bacillota</taxon>
        <taxon>Bacilli</taxon>
        <taxon>Bacillales</taxon>
        <taxon>Bacillaceae</taxon>
        <taxon>Bacillus</taxon>
        <taxon>Bacillus cereus group</taxon>
    </lineage>
</organism>
<feature type="chain" id="PRO_1000140071" description="CCA-adding enzyme">
    <location>
        <begin position="1"/>
        <end position="397"/>
    </location>
</feature>
<feature type="binding site" evidence="1">
    <location>
        <position position="26"/>
    </location>
    <ligand>
        <name>ATP</name>
        <dbReference type="ChEBI" id="CHEBI:30616"/>
    </ligand>
</feature>
<feature type="binding site" evidence="1">
    <location>
        <position position="26"/>
    </location>
    <ligand>
        <name>CTP</name>
        <dbReference type="ChEBI" id="CHEBI:37563"/>
    </ligand>
</feature>
<feature type="binding site" evidence="1">
    <location>
        <position position="29"/>
    </location>
    <ligand>
        <name>ATP</name>
        <dbReference type="ChEBI" id="CHEBI:30616"/>
    </ligand>
</feature>
<feature type="binding site" evidence="1">
    <location>
        <position position="29"/>
    </location>
    <ligand>
        <name>CTP</name>
        <dbReference type="ChEBI" id="CHEBI:37563"/>
    </ligand>
</feature>
<feature type="binding site" evidence="1">
    <location>
        <position position="39"/>
    </location>
    <ligand>
        <name>Mg(2+)</name>
        <dbReference type="ChEBI" id="CHEBI:18420"/>
    </ligand>
</feature>
<feature type="binding site" evidence="1">
    <location>
        <position position="41"/>
    </location>
    <ligand>
        <name>Mg(2+)</name>
        <dbReference type="ChEBI" id="CHEBI:18420"/>
    </ligand>
</feature>
<feature type="binding site" evidence="1">
    <location>
        <position position="110"/>
    </location>
    <ligand>
        <name>ATP</name>
        <dbReference type="ChEBI" id="CHEBI:30616"/>
    </ligand>
</feature>
<feature type="binding site" evidence="1">
    <location>
        <position position="110"/>
    </location>
    <ligand>
        <name>CTP</name>
        <dbReference type="ChEBI" id="CHEBI:37563"/>
    </ligand>
</feature>
<feature type="binding site" evidence="1">
    <location>
        <position position="153"/>
    </location>
    <ligand>
        <name>ATP</name>
        <dbReference type="ChEBI" id="CHEBI:30616"/>
    </ligand>
</feature>
<feature type="binding site" evidence="1">
    <location>
        <position position="153"/>
    </location>
    <ligand>
        <name>CTP</name>
        <dbReference type="ChEBI" id="CHEBI:37563"/>
    </ligand>
</feature>
<feature type="binding site" evidence="1">
    <location>
        <position position="156"/>
    </location>
    <ligand>
        <name>ATP</name>
        <dbReference type="ChEBI" id="CHEBI:30616"/>
    </ligand>
</feature>
<feature type="binding site" evidence="1">
    <location>
        <position position="156"/>
    </location>
    <ligand>
        <name>CTP</name>
        <dbReference type="ChEBI" id="CHEBI:37563"/>
    </ligand>
</feature>
<feature type="binding site" evidence="1">
    <location>
        <position position="159"/>
    </location>
    <ligand>
        <name>ATP</name>
        <dbReference type="ChEBI" id="CHEBI:30616"/>
    </ligand>
</feature>
<feature type="binding site" evidence="1">
    <location>
        <position position="159"/>
    </location>
    <ligand>
        <name>CTP</name>
        <dbReference type="ChEBI" id="CHEBI:37563"/>
    </ligand>
</feature>
<feature type="binding site" evidence="1">
    <location>
        <position position="162"/>
    </location>
    <ligand>
        <name>ATP</name>
        <dbReference type="ChEBI" id="CHEBI:30616"/>
    </ligand>
</feature>
<feature type="binding site" evidence="1">
    <location>
        <position position="162"/>
    </location>
    <ligand>
        <name>CTP</name>
        <dbReference type="ChEBI" id="CHEBI:37563"/>
    </ligand>
</feature>
<protein>
    <recommendedName>
        <fullName evidence="1">CCA-adding enzyme</fullName>
        <ecNumber evidence="1">2.7.7.72</ecNumber>
    </recommendedName>
    <alternativeName>
        <fullName evidence="1">CCA tRNA nucleotidyltransferase</fullName>
    </alternativeName>
    <alternativeName>
        <fullName evidence="1">tRNA CCA-pyrophosphorylase</fullName>
    </alternativeName>
    <alternativeName>
        <fullName evidence="1">tRNA adenylyl-/cytidylyl- transferase</fullName>
    </alternativeName>
    <alternativeName>
        <fullName evidence="1">tRNA nucleotidyltransferase</fullName>
    </alternativeName>
    <alternativeName>
        <fullName evidence="1">tRNA-NT</fullName>
    </alternativeName>
</protein>
<reference key="1">
    <citation type="submission" date="2008-10" db="EMBL/GenBank/DDBJ databases">
        <title>Genome sequence of Bacillus cereus AH187.</title>
        <authorList>
            <person name="Dodson R.J."/>
            <person name="Durkin A.S."/>
            <person name="Rosovitz M.J."/>
            <person name="Rasko D.A."/>
            <person name="Kolsto A.B."/>
            <person name="Okstad O.A."/>
            <person name="Ravel J."/>
            <person name="Sutton G."/>
        </authorList>
    </citation>
    <scope>NUCLEOTIDE SEQUENCE [LARGE SCALE GENOMIC DNA]</scope>
    <source>
        <strain>AH187</strain>
    </source>
</reference>
<name>CCA_BACC7</name>
<accession>B7HL50</accession>
<comment type="function">
    <text evidence="1">Catalyzes the addition and repair of the essential 3'-terminal CCA sequence in tRNAs without using a nucleic acid template. Adds these three nucleotides in the order of C, C, and A to the tRNA nucleotide-73, using CTP and ATP as substrates and producing inorganic pyrophosphate. tRNA 3'-terminal CCA addition is required both for tRNA processing and repair. Also involved in tRNA surveillance by mediating tandem CCA addition to generate a CCACCA at the 3' terminus of unstable tRNAs. While stable tRNAs receive only 3'-terminal CCA, unstable tRNAs are marked with CCACCA and rapidly degraded.</text>
</comment>
<comment type="catalytic activity">
    <reaction evidence="1">
        <text>a tRNA precursor + 2 CTP + ATP = a tRNA with a 3' CCA end + 3 diphosphate</text>
        <dbReference type="Rhea" id="RHEA:14433"/>
        <dbReference type="Rhea" id="RHEA-COMP:10465"/>
        <dbReference type="Rhea" id="RHEA-COMP:10468"/>
        <dbReference type="ChEBI" id="CHEBI:30616"/>
        <dbReference type="ChEBI" id="CHEBI:33019"/>
        <dbReference type="ChEBI" id="CHEBI:37563"/>
        <dbReference type="ChEBI" id="CHEBI:74896"/>
        <dbReference type="ChEBI" id="CHEBI:83071"/>
        <dbReference type="EC" id="2.7.7.72"/>
    </reaction>
</comment>
<comment type="catalytic activity">
    <reaction evidence="1">
        <text>a tRNA with a 3' CCA end + 2 CTP + ATP = a tRNA with a 3' CCACCA end + 3 diphosphate</text>
        <dbReference type="Rhea" id="RHEA:76235"/>
        <dbReference type="Rhea" id="RHEA-COMP:10468"/>
        <dbReference type="Rhea" id="RHEA-COMP:18655"/>
        <dbReference type="ChEBI" id="CHEBI:30616"/>
        <dbReference type="ChEBI" id="CHEBI:33019"/>
        <dbReference type="ChEBI" id="CHEBI:37563"/>
        <dbReference type="ChEBI" id="CHEBI:83071"/>
        <dbReference type="ChEBI" id="CHEBI:195187"/>
    </reaction>
    <physiologicalReaction direction="left-to-right" evidence="1">
        <dbReference type="Rhea" id="RHEA:76236"/>
    </physiologicalReaction>
</comment>
<comment type="cofactor">
    <cofactor evidence="1">
        <name>Mg(2+)</name>
        <dbReference type="ChEBI" id="CHEBI:18420"/>
    </cofactor>
</comment>
<comment type="subunit">
    <text evidence="1">Homodimer.</text>
</comment>
<comment type="miscellaneous">
    <text evidence="1">A single active site specifically recognizes both ATP and CTP and is responsible for their addition.</text>
</comment>
<comment type="similarity">
    <text evidence="1">Belongs to the tRNA nucleotidyltransferase/poly(A) polymerase family. Bacterial CCA-adding enzyme type 3 subfamily.</text>
</comment>
<keyword id="KW-0067">ATP-binding</keyword>
<keyword id="KW-0460">Magnesium</keyword>
<keyword id="KW-0479">Metal-binding</keyword>
<keyword id="KW-0547">Nucleotide-binding</keyword>
<keyword id="KW-0548">Nucleotidyltransferase</keyword>
<keyword id="KW-0692">RNA repair</keyword>
<keyword id="KW-0694">RNA-binding</keyword>
<keyword id="KW-0808">Transferase</keyword>
<keyword id="KW-0819">tRNA processing</keyword>
<proteinExistence type="inferred from homology"/>
<sequence>MERFKKASSIIETLKQQGHEAYFVGGSVRDLIIDRPIGDIDIATSALPEEVMAIFPRHVPVGLEHGTVIVVENGEPYEVTTFRTESEYEDFRRPSSVQFVRSLEEDLKRRDFTMNAIAMTEEGKMVDLFAGQEAIQKREIVTVGNAADRFQEDALRMMRGIRFVSTLGFSLETKTKQAIETYGHLLEHIAIERITVEFEKLLTGTYCVKALKELVETKLFSHLPYLQMSEEKLLKATQYKWDSFEADIEAWAFFLYCIGEEHPAVFLRQWKFSNKKIKDIVAVLLTIRKRKEKDWDTVFLYKTGIHIAEMAERVYEAMIESYDHTAVNRVQTLFQALPIKNRQEMNVTGNDLLNWASKKPGPWVAEMIQKIEEAIVQGNVVNEKECIREWLQECNLL</sequence>
<gene>
    <name evidence="1" type="primary">cca</name>
    <name type="ordered locus">BCAH187_A1703</name>
</gene>
<dbReference type="EC" id="2.7.7.72" evidence="1"/>
<dbReference type="EMBL" id="CP001177">
    <property type="protein sequence ID" value="ACJ77947.1"/>
    <property type="molecule type" value="Genomic_DNA"/>
</dbReference>
<dbReference type="SMR" id="B7HL50"/>
<dbReference type="KEGG" id="bcr:BCAH187_A1703"/>
<dbReference type="HOGENOM" id="CLU_015961_3_0_9"/>
<dbReference type="Proteomes" id="UP000002214">
    <property type="component" value="Chromosome"/>
</dbReference>
<dbReference type="GO" id="GO:0005524">
    <property type="term" value="F:ATP binding"/>
    <property type="evidence" value="ECO:0007669"/>
    <property type="project" value="UniProtKB-UniRule"/>
</dbReference>
<dbReference type="GO" id="GO:0004810">
    <property type="term" value="F:CCA tRNA nucleotidyltransferase activity"/>
    <property type="evidence" value="ECO:0007669"/>
    <property type="project" value="UniProtKB-UniRule"/>
</dbReference>
<dbReference type="GO" id="GO:0000287">
    <property type="term" value="F:magnesium ion binding"/>
    <property type="evidence" value="ECO:0007669"/>
    <property type="project" value="UniProtKB-UniRule"/>
</dbReference>
<dbReference type="GO" id="GO:0000049">
    <property type="term" value="F:tRNA binding"/>
    <property type="evidence" value="ECO:0007669"/>
    <property type="project" value="UniProtKB-UniRule"/>
</dbReference>
<dbReference type="GO" id="GO:0042245">
    <property type="term" value="P:RNA repair"/>
    <property type="evidence" value="ECO:0007669"/>
    <property type="project" value="UniProtKB-KW"/>
</dbReference>
<dbReference type="GO" id="GO:0001680">
    <property type="term" value="P:tRNA 3'-terminal CCA addition"/>
    <property type="evidence" value="ECO:0007669"/>
    <property type="project" value="UniProtKB-UniRule"/>
</dbReference>
<dbReference type="CDD" id="cd05398">
    <property type="entry name" value="NT_ClassII-CCAase"/>
    <property type="match status" value="1"/>
</dbReference>
<dbReference type="Gene3D" id="1.10.110.30">
    <property type="match status" value="1"/>
</dbReference>
<dbReference type="Gene3D" id="1.10.246.80">
    <property type="match status" value="1"/>
</dbReference>
<dbReference type="Gene3D" id="1.20.58.560">
    <property type="match status" value="1"/>
</dbReference>
<dbReference type="Gene3D" id="3.30.460.10">
    <property type="entry name" value="Beta Polymerase, domain 2"/>
    <property type="match status" value="1"/>
</dbReference>
<dbReference type="HAMAP" id="MF_01263">
    <property type="entry name" value="CCA_bact_type3"/>
    <property type="match status" value="1"/>
</dbReference>
<dbReference type="InterPro" id="IPR050264">
    <property type="entry name" value="Bact_CCA-adding_enz_type3_sf"/>
</dbReference>
<dbReference type="InterPro" id="IPR032810">
    <property type="entry name" value="CCA-adding_enz_C"/>
</dbReference>
<dbReference type="InterPro" id="IPR023068">
    <property type="entry name" value="CCA-adding_enz_firmicutes"/>
</dbReference>
<dbReference type="InterPro" id="IPR043519">
    <property type="entry name" value="NT_sf"/>
</dbReference>
<dbReference type="InterPro" id="IPR002646">
    <property type="entry name" value="PolA_pol_head_dom"/>
</dbReference>
<dbReference type="InterPro" id="IPR032828">
    <property type="entry name" value="PolyA_RNA-bd"/>
</dbReference>
<dbReference type="NCBIfam" id="NF009814">
    <property type="entry name" value="PRK13299.1"/>
    <property type="match status" value="1"/>
</dbReference>
<dbReference type="PANTHER" id="PTHR46173">
    <property type="entry name" value="CCA TRNA NUCLEOTIDYLTRANSFERASE 1, MITOCHONDRIAL"/>
    <property type="match status" value="1"/>
</dbReference>
<dbReference type="PANTHER" id="PTHR46173:SF1">
    <property type="entry name" value="CCA TRNA NUCLEOTIDYLTRANSFERASE 1, MITOCHONDRIAL"/>
    <property type="match status" value="1"/>
</dbReference>
<dbReference type="Pfam" id="PF01743">
    <property type="entry name" value="PolyA_pol"/>
    <property type="match status" value="1"/>
</dbReference>
<dbReference type="Pfam" id="PF12627">
    <property type="entry name" value="PolyA_pol_RNAbd"/>
    <property type="match status" value="1"/>
</dbReference>
<dbReference type="Pfam" id="PF13735">
    <property type="entry name" value="tRNA_NucTran2_2"/>
    <property type="match status" value="1"/>
</dbReference>
<dbReference type="SUPFAM" id="SSF81301">
    <property type="entry name" value="Nucleotidyltransferase"/>
    <property type="match status" value="1"/>
</dbReference>
<dbReference type="SUPFAM" id="SSF81891">
    <property type="entry name" value="Poly A polymerase C-terminal region-like"/>
    <property type="match status" value="1"/>
</dbReference>
<evidence type="ECO:0000255" key="1">
    <source>
        <dbReference type="HAMAP-Rule" id="MF_01263"/>
    </source>
</evidence>